<protein>
    <recommendedName>
        <fullName evidence="1">2-isopropylmalate synthase</fullName>
        <ecNumber evidence="1">2.3.3.13</ecNumber>
    </recommendedName>
    <alternativeName>
        <fullName evidence="1">Alpha-IPM synthase</fullName>
    </alternativeName>
    <alternativeName>
        <fullName evidence="1">Alpha-isopropylmalate synthase</fullName>
    </alternativeName>
</protein>
<gene>
    <name evidence="1" type="primary">leuA</name>
    <name type="ordered locus">A9601_11711</name>
</gene>
<reference key="1">
    <citation type="journal article" date="2007" name="PLoS Genet.">
        <title>Patterns and implications of gene gain and loss in the evolution of Prochlorococcus.</title>
        <authorList>
            <person name="Kettler G.C."/>
            <person name="Martiny A.C."/>
            <person name="Huang K."/>
            <person name="Zucker J."/>
            <person name="Coleman M.L."/>
            <person name="Rodrigue S."/>
            <person name="Chen F."/>
            <person name="Lapidus A."/>
            <person name="Ferriera S."/>
            <person name="Johnson J."/>
            <person name="Steglich C."/>
            <person name="Church G.M."/>
            <person name="Richardson P."/>
            <person name="Chisholm S.W."/>
        </authorList>
    </citation>
    <scope>NUCLEOTIDE SEQUENCE [LARGE SCALE GENOMIC DNA]</scope>
    <source>
        <strain>AS9601</strain>
    </source>
</reference>
<accession>A2BRP4</accession>
<sequence length="546" mass="59139">MSKDPGRILIFDTTLRDGEQSPGASLNLEEKLAIAHQLARLGVDVIEAGFPFASPGDFKAVNKIANAVGKENGPIICGLARASKGDIKACYEAVSPAPKKRIHTFIATSDIHLKHKLKKSRKDVLQIVPEMVNYAKSLVDDIEFSCEDASRSDPDFLYEVIQLAISAGATTINIPDTVGFTTPSEFGNLIADINKNVPNINEAVISVHGHNDLGLAVANFLEAVKNGARQLECTINGIGERAGNASLEELVMALHVRKSFFNSFFKRNPDSPTPLTAIRTEEITKTSRLVSNLTGMTVQPNKAIVGANAFAHESGIHQDGVLKNRLTYEIIDAKTVGLSDNKISLGKLSGRSAVRARLEEMGYDLSREDLNDAFARFKDLADRKREITDRDLEAIVSEQVQLPEAKFQLSLVQVSCGNASKPTATISLLNTEDNTEDTAVSIGTGPVDAVCEALNKLAKVPNELIEFSVKSVTEGIDALGEVTIRIRRDNKIYSGHSADTDVVVAAANAYVNALNRLVFSEKKNSIHPQFDSLENSTNTFLSNNAN</sequence>
<keyword id="KW-0028">Amino-acid biosynthesis</keyword>
<keyword id="KW-0100">Branched-chain amino acid biosynthesis</keyword>
<keyword id="KW-0963">Cytoplasm</keyword>
<keyword id="KW-0432">Leucine biosynthesis</keyword>
<keyword id="KW-0464">Manganese</keyword>
<keyword id="KW-0479">Metal-binding</keyword>
<keyword id="KW-0808">Transferase</keyword>
<organism>
    <name type="scientific">Prochlorococcus marinus (strain AS9601)</name>
    <dbReference type="NCBI Taxonomy" id="146891"/>
    <lineage>
        <taxon>Bacteria</taxon>
        <taxon>Bacillati</taxon>
        <taxon>Cyanobacteriota</taxon>
        <taxon>Cyanophyceae</taxon>
        <taxon>Synechococcales</taxon>
        <taxon>Prochlorococcaceae</taxon>
        <taxon>Prochlorococcus</taxon>
    </lineage>
</organism>
<evidence type="ECO:0000255" key="1">
    <source>
        <dbReference type="HAMAP-Rule" id="MF_01025"/>
    </source>
</evidence>
<proteinExistence type="inferred from homology"/>
<name>LEU1_PROMS</name>
<feature type="chain" id="PRO_1000149248" description="2-isopropylmalate synthase">
    <location>
        <begin position="1"/>
        <end position="546"/>
    </location>
</feature>
<feature type="domain" description="Pyruvate carboxyltransferase" evidence="1">
    <location>
        <begin position="8"/>
        <end position="271"/>
    </location>
</feature>
<feature type="region of interest" description="Regulatory domain" evidence="1">
    <location>
        <begin position="408"/>
        <end position="546"/>
    </location>
</feature>
<feature type="binding site" evidence="1">
    <location>
        <position position="17"/>
    </location>
    <ligand>
        <name>Mn(2+)</name>
        <dbReference type="ChEBI" id="CHEBI:29035"/>
    </ligand>
</feature>
<feature type="binding site" evidence="1">
    <location>
        <position position="208"/>
    </location>
    <ligand>
        <name>Mn(2+)</name>
        <dbReference type="ChEBI" id="CHEBI:29035"/>
    </ligand>
</feature>
<feature type="binding site" evidence="1">
    <location>
        <position position="210"/>
    </location>
    <ligand>
        <name>Mn(2+)</name>
        <dbReference type="ChEBI" id="CHEBI:29035"/>
    </ligand>
</feature>
<feature type="binding site" evidence="1">
    <location>
        <position position="244"/>
    </location>
    <ligand>
        <name>Mn(2+)</name>
        <dbReference type="ChEBI" id="CHEBI:29035"/>
    </ligand>
</feature>
<dbReference type="EC" id="2.3.3.13" evidence="1"/>
<dbReference type="EMBL" id="CP000551">
    <property type="protein sequence ID" value="ABM70455.1"/>
    <property type="molecule type" value="Genomic_DNA"/>
</dbReference>
<dbReference type="RefSeq" id="WP_011818602.1">
    <property type="nucleotide sequence ID" value="NC_008816.1"/>
</dbReference>
<dbReference type="SMR" id="A2BRP4"/>
<dbReference type="STRING" id="146891.A9601_11711"/>
<dbReference type="KEGG" id="pmb:A9601_11711"/>
<dbReference type="eggNOG" id="COG0119">
    <property type="taxonomic scope" value="Bacteria"/>
</dbReference>
<dbReference type="HOGENOM" id="CLU_022158_0_1_3"/>
<dbReference type="OrthoDB" id="9804858at2"/>
<dbReference type="UniPathway" id="UPA00048">
    <property type="reaction ID" value="UER00070"/>
</dbReference>
<dbReference type="Proteomes" id="UP000002590">
    <property type="component" value="Chromosome"/>
</dbReference>
<dbReference type="GO" id="GO:0005737">
    <property type="term" value="C:cytoplasm"/>
    <property type="evidence" value="ECO:0007669"/>
    <property type="project" value="UniProtKB-SubCell"/>
</dbReference>
<dbReference type="GO" id="GO:0003852">
    <property type="term" value="F:2-isopropylmalate synthase activity"/>
    <property type="evidence" value="ECO:0007669"/>
    <property type="project" value="UniProtKB-UniRule"/>
</dbReference>
<dbReference type="GO" id="GO:0003985">
    <property type="term" value="F:acetyl-CoA C-acetyltransferase activity"/>
    <property type="evidence" value="ECO:0007669"/>
    <property type="project" value="UniProtKB-UniRule"/>
</dbReference>
<dbReference type="GO" id="GO:0030145">
    <property type="term" value="F:manganese ion binding"/>
    <property type="evidence" value="ECO:0007669"/>
    <property type="project" value="UniProtKB-UniRule"/>
</dbReference>
<dbReference type="GO" id="GO:0009098">
    <property type="term" value="P:L-leucine biosynthetic process"/>
    <property type="evidence" value="ECO:0007669"/>
    <property type="project" value="UniProtKB-UniRule"/>
</dbReference>
<dbReference type="CDD" id="cd07940">
    <property type="entry name" value="DRE_TIM_IPMS"/>
    <property type="match status" value="1"/>
</dbReference>
<dbReference type="FunFam" id="1.10.238.260:FF:000001">
    <property type="entry name" value="2-isopropylmalate synthase"/>
    <property type="match status" value="1"/>
</dbReference>
<dbReference type="FunFam" id="3.20.20.70:FF:000010">
    <property type="entry name" value="2-isopropylmalate synthase"/>
    <property type="match status" value="1"/>
</dbReference>
<dbReference type="Gene3D" id="1.10.238.260">
    <property type="match status" value="1"/>
</dbReference>
<dbReference type="Gene3D" id="3.30.160.270">
    <property type="match status" value="1"/>
</dbReference>
<dbReference type="Gene3D" id="3.20.20.70">
    <property type="entry name" value="Aldolase class I"/>
    <property type="match status" value="1"/>
</dbReference>
<dbReference type="HAMAP" id="MF_01025">
    <property type="entry name" value="LeuA_type1"/>
    <property type="match status" value="1"/>
</dbReference>
<dbReference type="InterPro" id="IPR050073">
    <property type="entry name" value="2-IPM_HCS-like"/>
</dbReference>
<dbReference type="InterPro" id="IPR013709">
    <property type="entry name" value="2-isopropylmalate_synth_dimer"/>
</dbReference>
<dbReference type="InterPro" id="IPR002034">
    <property type="entry name" value="AIPM/Hcit_synth_CS"/>
</dbReference>
<dbReference type="InterPro" id="IPR013785">
    <property type="entry name" value="Aldolase_TIM"/>
</dbReference>
<dbReference type="InterPro" id="IPR054691">
    <property type="entry name" value="LeuA/HCS_post-cat"/>
</dbReference>
<dbReference type="InterPro" id="IPR036230">
    <property type="entry name" value="LeuA_allosteric_dom_sf"/>
</dbReference>
<dbReference type="InterPro" id="IPR005671">
    <property type="entry name" value="LeuA_bact_synth"/>
</dbReference>
<dbReference type="InterPro" id="IPR000891">
    <property type="entry name" value="PYR_CT"/>
</dbReference>
<dbReference type="NCBIfam" id="TIGR00973">
    <property type="entry name" value="leuA_bact"/>
    <property type="match status" value="1"/>
</dbReference>
<dbReference type="NCBIfam" id="NF002086">
    <property type="entry name" value="PRK00915.1-3"/>
    <property type="match status" value="1"/>
</dbReference>
<dbReference type="PANTHER" id="PTHR10277:SF9">
    <property type="entry name" value="2-ISOPROPYLMALATE SYNTHASE 1, CHLOROPLASTIC-RELATED"/>
    <property type="match status" value="1"/>
</dbReference>
<dbReference type="PANTHER" id="PTHR10277">
    <property type="entry name" value="HOMOCITRATE SYNTHASE-RELATED"/>
    <property type="match status" value="1"/>
</dbReference>
<dbReference type="Pfam" id="PF22617">
    <property type="entry name" value="HCS_D2"/>
    <property type="match status" value="1"/>
</dbReference>
<dbReference type="Pfam" id="PF00682">
    <property type="entry name" value="HMGL-like"/>
    <property type="match status" value="1"/>
</dbReference>
<dbReference type="Pfam" id="PF08502">
    <property type="entry name" value="LeuA_dimer"/>
    <property type="match status" value="1"/>
</dbReference>
<dbReference type="SMART" id="SM00917">
    <property type="entry name" value="LeuA_dimer"/>
    <property type="match status" value="1"/>
</dbReference>
<dbReference type="SUPFAM" id="SSF110921">
    <property type="entry name" value="2-isopropylmalate synthase LeuA, allosteric (dimerisation) domain"/>
    <property type="match status" value="1"/>
</dbReference>
<dbReference type="SUPFAM" id="SSF51569">
    <property type="entry name" value="Aldolase"/>
    <property type="match status" value="1"/>
</dbReference>
<dbReference type="PROSITE" id="PS00815">
    <property type="entry name" value="AIPM_HOMOCIT_SYNTH_1"/>
    <property type="match status" value="1"/>
</dbReference>
<dbReference type="PROSITE" id="PS00816">
    <property type="entry name" value="AIPM_HOMOCIT_SYNTH_2"/>
    <property type="match status" value="1"/>
</dbReference>
<dbReference type="PROSITE" id="PS50991">
    <property type="entry name" value="PYR_CT"/>
    <property type="match status" value="1"/>
</dbReference>
<comment type="function">
    <text evidence="1">Catalyzes the condensation of the acetyl group of acetyl-CoA with 3-methyl-2-oxobutanoate (2-ketoisovalerate) to form 3-carboxy-3-hydroxy-4-methylpentanoate (2-isopropylmalate).</text>
</comment>
<comment type="catalytic activity">
    <reaction evidence="1">
        <text>3-methyl-2-oxobutanoate + acetyl-CoA + H2O = (2S)-2-isopropylmalate + CoA + H(+)</text>
        <dbReference type="Rhea" id="RHEA:21524"/>
        <dbReference type="ChEBI" id="CHEBI:1178"/>
        <dbReference type="ChEBI" id="CHEBI:11851"/>
        <dbReference type="ChEBI" id="CHEBI:15377"/>
        <dbReference type="ChEBI" id="CHEBI:15378"/>
        <dbReference type="ChEBI" id="CHEBI:57287"/>
        <dbReference type="ChEBI" id="CHEBI:57288"/>
        <dbReference type="EC" id="2.3.3.13"/>
    </reaction>
</comment>
<comment type="cofactor">
    <cofactor evidence="1">
        <name>Mn(2+)</name>
        <dbReference type="ChEBI" id="CHEBI:29035"/>
    </cofactor>
</comment>
<comment type="pathway">
    <text evidence="1">Amino-acid biosynthesis; L-leucine biosynthesis; L-leucine from 3-methyl-2-oxobutanoate: step 1/4.</text>
</comment>
<comment type="subunit">
    <text evidence="1">Homodimer.</text>
</comment>
<comment type="subcellular location">
    <subcellularLocation>
        <location evidence="1">Cytoplasm</location>
    </subcellularLocation>
</comment>
<comment type="similarity">
    <text evidence="1">Belongs to the alpha-IPM synthase/homocitrate synthase family. LeuA type 1 subfamily.</text>
</comment>